<gene>
    <name evidence="1" type="primary">pgi</name>
    <name type="ordered locus">LCABL_12870</name>
</gene>
<reference key="1">
    <citation type="submission" date="2008-06" db="EMBL/GenBank/DDBJ databases">
        <title>Lactobacillus casei BL23 complete genome sequence.</title>
        <authorList>
            <person name="Maze A."/>
            <person name="Boel G."/>
            <person name="Bourand A."/>
            <person name="Loux V."/>
            <person name="Gibrat J.F."/>
            <person name="Zuniga M."/>
            <person name="Hartke A."/>
            <person name="Deutscher J."/>
        </authorList>
    </citation>
    <scope>NUCLEOTIDE SEQUENCE [LARGE SCALE GENOMIC DNA]</scope>
    <source>
        <strain>BL23</strain>
    </source>
</reference>
<comment type="function">
    <text evidence="1">Catalyzes the reversible isomerization of glucose-6-phosphate to fructose-6-phosphate.</text>
</comment>
<comment type="catalytic activity">
    <reaction evidence="1">
        <text>alpha-D-glucose 6-phosphate = beta-D-fructose 6-phosphate</text>
        <dbReference type="Rhea" id="RHEA:11816"/>
        <dbReference type="ChEBI" id="CHEBI:57634"/>
        <dbReference type="ChEBI" id="CHEBI:58225"/>
        <dbReference type="EC" id="5.3.1.9"/>
    </reaction>
</comment>
<comment type="pathway">
    <text evidence="1">Carbohydrate biosynthesis; gluconeogenesis.</text>
</comment>
<comment type="pathway">
    <text evidence="1">Carbohydrate degradation; glycolysis; D-glyceraldehyde 3-phosphate and glycerone phosphate from D-glucose: step 2/4.</text>
</comment>
<comment type="subcellular location">
    <subcellularLocation>
        <location evidence="1">Cytoplasm</location>
    </subcellularLocation>
</comment>
<comment type="similarity">
    <text evidence="1">Belongs to the GPI family.</text>
</comment>
<keyword id="KW-0963">Cytoplasm</keyword>
<keyword id="KW-0312">Gluconeogenesis</keyword>
<keyword id="KW-0324">Glycolysis</keyword>
<keyword id="KW-0413">Isomerase</keyword>
<protein>
    <recommendedName>
        <fullName evidence="1">Glucose-6-phosphate isomerase</fullName>
        <shortName evidence="1">GPI</shortName>
        <ecNumber evidence="1">5.3.1.9</ecNumber>
    </recommendedName>
    <alternativeName>
        <fullName evidence="1">Phosphoglucose isomerase</fullName>
        <shortName evidence="1">PGI</shortName>
    </alternativeName>
    <alternativeName>
        <fullName evidence="1">Phosphohexose isomerase</fullName>
        <shortName evidence="1">PHI</shortName>
    </alternativeName>
</protein>
<dbReference type="EC" id="5.3.1.9" evidence="1"/>
<dbReference type="EMBL" id="FM177140">
    <property type="protein sequence ID" value="CAQ66371.1"/>
    <property type="molecule type" value="Genomic_DNA"/>
</dbReference>
<dbReference type="SMR" id="B3WDC0"/>
<dbReference type="KEGG" id="lcb:LCABL_12870"/>
<dbReference type="HOGENOM" id="CLU_037303_0_1_9"/>
<dbReference type="UniPathway" id="UPA00109">
    <property type="reaction ID" value="UER00181"/>
</dbReference>
<dbReference type="UniPathway" id="UPA00138"/>
<dbReference type="GO" id="GO:0005829">
    <property type="term" value="C:cytosol"/>
    <property type="evidence" value="ECO:0007669"/>
    <property type="project" value="TreeGrafter"/>
</dbReference>
<dbReference type="GO" id="GO:0097367">
    <property type="term" value="F:carbohydrate derivative binding"/>
    <property type="evidence" value="ECO:0007669"/>
    <property type="project" value="InterPro"/>
</dbReference>
<dbReference type="GO" id="GO:0004347">
    <property type="term" value="F:glucose-6-phosphate isomerase activity"/>
    <property type="evidence" value="ECO:0007669"/>
    <property type="project" value="UniProtKB-UniRule"/>
</dbReference>
<dbReference type="GO" id="GO:0048029">
    <property type="term" value="F:monosaccharide binding"/>
    <property type="evidence" value="ECO:0007669"/>
    <property type="project" value="TreeGrafter"/>
</dbReference>
<dbReference type="GO" id="GO:0006094">
    <property type="term" value="P:gluconeogenesis"/>
    <property type="evidence" value="ECO:0007669"/>
    <property type="project" value="UniProtKB-UniRule"/>
</dbReference>
<dbReference type="GO" id="GO:0051156">
    <property type="term" value="P:glucose 6-phosphate metabolic process"/>
    <property type="evidence" value="ECO:0007669"/>
    <property type="project" value="TreeGrafter"/>
</dbReference>
<dbReference type="GO" id="GO:0006096">
    <property type="term" value="P:glycolytic process"/>
    <property type="evidence" value="ECO:0007669"/>
    <property type="project" value="UniProtKB-UniRule"/>
</dbReference>
<dbReference type="CDD" id="cd05015">
    <property type="entry name" value="SIS_PGI_1"/>
    <property type="match status" value="1"/>
</dbReference>
<dbReference type="CDD" id="cd05016">
    <property type="entry name" value="SIS_PGI_2"/>
    <property type="match status" value="1"/>
</dbReference>
<dbReference type="FunFam" id="3.40.50.10490:FF:000015">
    <property type="entry name" value="Glucose-6-phosphate isomerase"/>
    <property type="match status" value="1"/>
</dbReference>
<dbReference type="FunFam" id="3.40.50.10490:FF:000016">
    <property type="entry name" value="Glucose-6-phosphate isomerase"/>
    <property type="match status" value="1"/>
</dbReference>
<dbReference type="Gene3D" id="3.40.50.10490">
    <property type="entry name" value="Glucose-6-phosphate isomerase like protein, domain 1"/>
    <property type="match status" value="3"/>
</dbReference>
<dbReference type="HAMAP" id="MF_00473">
    <property type="entry name" value="G6P_isomerase"/>
    <property type="match status" value="1"/>
</dbReference>
<dbReference type="InterPro" id="IPR001672">
    <property type="entry name" value="G6P_Isomerase"/>
</dbReference>
<dbReference type="InterPro" id="IPR018189">
    <property type="entry name" value="Phosphoglucose_isomerase_CS"/>
</dbReference>
<dbReference type="InterPro" id="IPR046348">
    <property type="entry name" value="SIS_dom_sf"/>
</dbReference>
<dbReference type="InterPro" id="IPR035476">
    <property type="entry name" value="SIS_PGI_1"/>
</dbReference>
<dbReference type="InterPro" id="IPR035482">
    <property type="entry name" value="SIS_PGI_2"/>
</dbReference>
<dbReference type="NCBIfam" id="NF010697">
    <property type="entry name" value="PRK14097.1"/>
    <property type="match status" value="1"/>
</dbReference>
<dbReference type="PANTHER" id="PTHR11469">
    <property type="entry name" value="GLUCOSE-6-PHOSPHATE ISOMERASE"/>
    <property type="match status" value="1"/>
</dbReference>
<dbReference type="PANTHER" id="PTHR11469:SF1">
    <property type="entry name" value="GLUCOSE-6-PHOSPHATE ISOMERASE"/>
    <property type="match status" value="1"/>
</dbReference>
<dbReference type="Pfam" id="PF00342">
    <property type="entry name" value="PGI"/>
    <property type="match status" value="1"/>
</dbReference>
<dbReference type="PRINTS" id="PR00662">
    <property type="entry name" value="G6PISOMERASE"/>
</dbReference>
<dbReference type="SUPFAM" id="SSF53697">
    <property type="entry name" value="SIS domain"/>
    <property type="match status" value="1"/>
</dbReference>
<dbReference type="PROSITE" id="PS00765">
    <property type="entry name" value="P_GLUCOSE_ISOMERASE_1"/>
    <property type="match status" value="1"/>
</dbReference>
<dbReference type="PROSITE" id="PS00174">
    <property type="entry name" value="P_GLUCOSE_ISOMERASE_2"/>
    <property type="match status" value="1"/>
</dbReference>
<dbReference type="PROSITE" id="PS51463">
    <property type="entry name" value="P_GLUCOSE_ISOMERASE_3"/>
    <property type="match status" value="1"/>
</dbReference>
<name>G6PI_LACCB</name>
<evidence type="ECO:0000255" key="1">
    <source>
        <dbReference type="HAMAP-Rule" id="MF_00473"/>
    </source>
</evidence>
<accession>B3WDC0</accession>
<sequence>MSYIKFDSSKLDKFVHANELEQMQPLVTAADKELREGTGAGKDFRGFIDLPVNYDKDEFARIKAAAKKVQGNSQVFVAIGIGGSYLGARMAVDFLSQTFRNLDPDLKFPEVYFAGNSISGTYLADLLDIIGDRDFSINVISKSGTTTEPSIAFRVLKAKLIEKYGKDGAKERIYATTDRAKGALKQEADAEGYEEFVVPDDVGGRFSVMSAVGLLPIAVAGGDIDEMMRGLGDGRKAYASADLKENEAYQYAALRNILYRKGYTTELLENYEPTLQYLGEWWKQLMGESEGKDQKGIYPSSANFSTDLHSLGQYIQEGLRNLMETVVWVEEPNRDLTIPEDANNLDGLGYLAGKKMSFVNRKAYEGVVLAHTDGGVPVMTVSIPKQDAYTLGYLIYFFEAAVSISGYLNGINPFNQPGVEAYKKNMFALLGRPGYEDMTKELNARL</sequence>
<proteinExistence type="inferred from homology"/>
<feature type="chain" id="PRO_1000125734" description="Glucose-6-phosphate isomerase">
    <location>
        <begin position="1"/>
        <end position="446"/>
    </location>
</feature>
<feature type="active site" description="Proton donor" evidence="1">
    <location>
        <position position="288"/>
    </location>
</feature>
<feature type="active site" evidence="1">
    <location>
        <position position="309"/>
    </location>
</feature>
<feature type="active site" evidence="1">
    <location>
        <position position="423"/>
    </location>
</feature>
<organism>
    <name type="scientific">Lacticaseibacillus casei (strain BL23)</name>
    <name type="common">Lactobacillus casei</name>
    <dbReference type="NCBI Taxonomy" id="543734"/>
    <lineage>
        <taxon>Bacteria</taxon>
        <taxon>Bacillati</taxon>
        <taxon>Bacillota</taxon>
        <taxon>Bacilli</taxon>
        <taxon>Lactobacillales</taxon>
        <taxon>Lactobacillaceae</taxon>
        <taxon>Lacticaseibacillus</taxon>
    </lineage>
</organism>